<protein>
    <recommendedName>
        <fullName evidence="1">Nucleoid-associated protein MARTH_orf159</fullName>
    </recommendedName>
</protein>
<proteinExistence type="inferred from homology"/>
<comment type="function">
    <text evidence="1">Binds to DNA and alters its conformation. May be involved in regulation of gene expression, nucleoid organization and DNA protection.</text>
</comment>
<comment type="subunit">
    <text evidence="1">Homodimer.</text>
</comment>
<comment type="subcellular location">
    <subcellularLocation>
        <location evidence="1">Cytoplasm</location>
        <location evidence="1">Nucleoid</location>
    </subcellularLocation>
</comment>
<comment type="similarity">
    <text evidence="1">Belongs to the YbaB/EbfC family.</text>
</comment>
<reference key="1">
    <citation type="journal article" date="2008" name="Infect. Immun.">
        <title>Genome of Mycoplasma arthritidis.</title>
        <authorList>
            <person name="Dybvig K."/>
            <person name="Zuhua C."/>
            <person name="Lao P."/>
            <person name="Jordan D.S."/>
            <person name="French C.T."/>
            <person name="Tu A.H."/>
            <person name="Loraine A.E."/>
        </authorList>
    </citation>
    <scope>NUCLEOTIDE SEQUENCE [LARGE SCALE GENOMIC DNA]</scope>
    <source>
        <strain>158L3-1</strain>
    </source>
</reference>
<organism>
    <name type="scientific">Metamycoplasma arthritidis (strain 158L3-1)</name>
    <name type="common">Mycoplasma arthritidis</name>
    <dbReference type="NCBI Taxonomy" id="243272"/>
    <lineage>
        <taxon>Bacteria</taxon>
        <taxon>Bacillati</taxon>
        <taxon>Mycoplasmatota</taxon>
        <taxon>Mycoplasmoidales</taxon>
        <taxon>Metamycoplasmataceae</taxon>
        <taxon>Metamycoplasma</taxon>
    </lineage>
</organism>
<feature type="chain" id="PRO_1000114623" description="Nucleoid-associated protein MARTH_orf159">
    <location>
        <begin position="1"/>
        <end position="95"/>
    </location>
</feature>
<dbReference type="EMBL" id="CP001047">
    <property type="protein sequence ID" value="ACF07087.1"/>
    <property type="molecule type" value="Genomic_DNA"/>
</dbReference>
<dbReference type="RefSeq" id="WP_012498044.1">
    <property type="nucleotide sequence ID" value="NC_011025.1"/>
</dbReference>
<dbReference type="SMR" id="B3PM35"/>
<dbReference type="STRING" id="243272.MARTH_orf159"/>
<dbReference type="KEGG" id="mat:MARTH_orf159"/>
<dbReference type="eggNOG" id="COG0718">
    <property type="taxonomic scope" value="Bacteria"/>
</dbReference>
<dbReference type="HOGENOM" id="CLU_140930_1_2_14"/>
<dbReference type="Proteomes" id="UP000008812">
    <property type="component" value="Chromosome"/>
</dbReference>
<dbReference type="GO" id="GO:0043590">
    <property type="term" value="C:bacterial nucleoid"/>
    <property type="evidence" value="ECO:0007669"/>
    <property type="project" value="UniProtKB-UniRule"/>
</dbReference>
<dbReference type="GO" id="GO:0005737">
    <property type="term" value="C:cytoplasm"/>
    <property type="evidence" value="ECO:0007669"/>
    <property type="project" value="UniProtKB-UniRule"/>
</dbReference>
<dbReference type="GO" id="GO:0003677">
    <property type="term" value="F:DNA binding"/>
    <property type="evidence" value="ECO:0007669"/>
    <property type="project" value="UniProtKB-UniRule"/>
</dbReference>
<dbReference type="Gene3D" id="3.30.1310.10">
    <property type="entry name" value="Nucleoid-associated protein YbaB-like domain"/>
    <property type="match status" value="1"/>
</dbReference>
<dbReference type="HAMAP" id="MF_00274">
    <property type="entry name" value="DNA_YbaB_EbfC"/>
    <property type="match status" value="1"/>
</dbReference>
<dbReference type="InterPro" id="IPR036894">
    <property type="entry name" value="YbaB-like_sf"/>
</dbReference>
<dbReference type="InterPro" id="IPR004401">
    <property type="entry name" value="YbaB/EbfC"/>
</dbReference>
<dbReference type="NCBIfam" id="TIGR00103">
    <property type="entry name" value="DNA_YbaB_EbfC"/>
    <property type="match status" value="1"/>
</dbReference>
<dbReference type="Pfam" id="PF02575">
    <property type="entry name" value="YbaB_DNA_bd"/>
    <property type="match status" value="1"/>
</dbReference>
<dbReference type="PIRSF" id="PIRSF004555">
    <property type="entry name" value="UCP004555"/>
    <property type="match status" value="1"/>
</dbReference>
<dbReference type="SUPFAM" id="SSF82607">
    <property type="entry name" value="YbaB-like"/>
    <property type="match status" value="1"/>
</dbReference>
<keyword id="KW-0963">Cytoplasm</keyword>
<keyword id="KW-0238">DNA-binding</keyword>
<keyword id="KW-1185">Reference proteome</keyword>
<evidence type="ECO:0000255" key="1">
    <source>
        <dbReference type="HAMAP-Rule" id="MF_00274"/>
    </source>
</evidence>
<accession>B3PM35</accession>
<sequence length="95" mass="10863">MNINEMLKKAKRLQAEMEVEEKEIAKKEFVVKKQGIKVVMLGTRKIKTIEISPALIDPEDPELVQDLVMLAINEAIDIIDEEYDELGDKYSNTSI</sequence>
<name>Y159_META1</name>
<gene>
    <name type="ordered locus">MARTH_orf159</name>
</gene>